<sequence length="295" mass="32931">MDLRDLKTFLHLAESRHFGRSARAMHVSPSTLSRQIQRLEEDLGQPLFVRDNRTVTLTEAGEELRVFAQQTLLQYQQLRHTLDQQGPSLSGELHIFCSVTAAYSHLPPILDRFRAEHPSVEIKLTTGDAADAMEKVVTGEADLAIAGKPETLPGAVAFSMLENLAVVLIAPALPCPVRNQVSVDKPDWSTVPFIMADQGPVRRRIELWFRRHKISNPQIYATVGGHEAMVSMVALGCGVALLPEVVLENSPEPVRNRVMILERSDEKTPFELGVCAQKKRLHEPLIDAFWKILPN</sequence>
<feature type="chain" id="PRO_0000105657" description="HTH-type transcriptional activator IlvY">
    <location>
        <begin position="1"/>
        <end position="295"/>
    </location>
</feature>
<feature type="domain" description="HTH lysR-type" evidence="1">
    <location>
        <begin position="1"/>
        <end position="58"/>
    </location>
</feature>
<feature type="DNA-binding region" description="H-T-H motif" evidence="1">
    <location>
        <begin position="18"/>
        <end position="37"/>
    </location>
</feature>
<evidence type="ECO:0000255" key="1">
    <source>
        <dbReference type="PROSITE-ProRule" id="PRU00253"/>
    </source>
</evidence>
<evidence type="ECO:0000305" key="2"/>
<name>ILVY_SALTY</name>
<organism>
    <name type="scientific">Salmonella typhimurium (strain LT2 / SGSC1412 / ATCC 700720)</name>
    <dbReference type="NCBI Taxonomy" id="99287"/>
    <lineage>
        <taxon>Bacteria</taxon>
        <taxon>Pseudomonadati</taxon>
        <taxon>Pseudomonadota</taxon>
        <taxon>Gammaproteobacteria</taxon>
        <taxon>Enterobacterales</taxon>
        <taxon>Enterobacteriaceae</taxon>
        <taxon>Salmonella</taxon>
    </lineage>
</organism>
<dbReference type="EMBL" id="AF233324">
    <property type="protein sequence ID" value="AAF33477.1"/>
    <property type="status" value="ALT_INIT"/>
    <property type="molecule type" value="Genomic_DNA"/>
</dbReference>
<dbReference type="EMBL" id="AE006468">
    <property type="protein sequence ID" value="AAL22758.1"/>
    <property type="molecule type" value="Genomic_DNA"/>
</dbReference>
<dbReference type="EMBL" id="K03522">
    <property type="protein sequence ID" value="AAA27153.1"/>
    <property type="molecule type" value="Genomic_DNA"/>
</dbReference>
<dbReference type="RefSeq" id="NP_462799.1">
    <property type="nucleotide sequence ID" value="NC_003197.2"/>
</dbReference>
<dbReference type="RefSeq" id="WP_000365798.1">
    <property type="nucleotide sequence ID" value="NC_003197.2"/>
</dbReference>
<dbReference type="SMR" id="P0A2Q2"/>
<dbReference type="STRING" id="99287.STM3908"/>
<dbReference type="PaxDb" id="99287-STM3908"/>
<dbReference type="GeneID" id="1255434"/>
<dbReference type="KEGG" id="stm:STM3908"/>
<dbReference type="PATRIC" id="fig|99287.12.peg.4130"/>
<dbReference type="HOGENOM" id="CLU_039613_6_1_6"/>
<dbReference type="OMA" id="FERDNRS"/>
<dbReference type="PhylomeDB" id="P0A2Q2"/>
<dbReference type="BioCyc" id="SENT99287:STM3908-MONOMER"/>
<dbReference type="Proteomes" id="UP000001014">
    <property type="component" value="Chromosome"/>
</dbReference>
<dbReference type="GO" id="GO:0005737">
    <property type="term" value="C:cytoplasm"/>
    <property type="evidence" value="ECO:0007669"/>
    <property type="project" value="UniProtKB-SubCell"/>
</dbReference>
<dbReference type="GO" id="GO:0003700">
    <property type="term" value="F:DNA-binding transcription factor activity"/>
    <property type="evidence" value="ECO:0007669"/>
    <property type="project" value="InterPro"/>
</dbReference>
<dbReference type="GO" id="GO:0000976">
    <property type="term" value="F:transcription cis-regulatory region binding"/>
    <property type="evidence" value="ECO:0000318"/>
    <property type="project" value="GO_Central"/>
</dbReference>
<dbReference type="GO" id="GO:0008652">
    <property type="term" value="P:amino acid biosynthetic process"/>
    <property type="evidence" value="ECO:0007669"/>
    <property type="project" value="UniProtKB-KW"/>
</dbReference>
<dbReference type="GO" id="GO:0009082">
    <property type="term" value="P:branched-chain amino acid biosynthetic process"/>
    <property type="evidence" value="ECO:0007669"/>
    <property type="project" value="UniProtKB-KW"/>
</dbReference>
<dbReference type="GO" id="GO:0006355">
    <property type="term" value="P:regulation of DNA-templated transcription"/>
    <property type="evidence" value="ECO:0000318"/>
    <property type="project" value="GO_Central"/>
</dbReference>
<dbReference type="CDD" id="cd08430">
    <property type="entry name" value="PBP2_IlvY"/>
    <property type="match status" value="1"/>
</dbReference>
<dbReference type="FunFam" id="1.10.10.10:FF:000001">
    <property type="entry name" value="LysR family transcriptional regulator"/>
    <property type="match status" value="1"/>
</dbReference>
<dbReference type="Gene3D" id="3.40.190.10">
    <property type="entry name" value="Periplasmic binding protein-like II"/>
    <property type="match status" value="2"/>
</dbReference>
<dbReference type="Gene3D" id="1.10.10.10">
    <property type="entry name" value="Winged helix-like DNA-binding domain superfamily/Winged helix DNA-binding domain"/>
    <property type="match status" value="1"/>
</dbReference>
<dbReference type="InterPro" id="IPR037404">
    <property type="entry name" value="IlvY_PBP2"/>
</dbReference>
<dbReference type="InterPro" id="IPR005119">
    <property type="entry name" value="LysR_subst-bd"/>
</dbReference>
<dbReference type="InterPro" id="IPR000847">
    <property type="entry name" value="Tscrpt_reg_HTH_LysR"/>
</dbReference>
<dbReference type="InterPro" id="IPR036388">
    <property type="entry name" value="WH-like_DNA-bd_sf"/>
</dbReference>
<dbReference type="InterPro" id="IPR036390">
    <property type="entry name" value="WH_DNA-bd_sf"/>
</dbReference>
<dbReference type="NCBIfam" id="NF008722">
    <property type="entry name" value="PRK11716.1"/>
    <property type="match status" value="1"/>
</dbReference>
<dbReference type="PANTHER" id="PTHR30126">
    <property type="entry name" value="HTH-TYPE TRANSCRIPTIONAL REGULATOR"/>
    <property type="match status" value="1"/>
</dbReference>
<dbReference type="PANTHER" id="PTHR30126:SF81">
    <property type="entry name" value="HTH-TYPE TRANSCRIPTIONAL REGULATOR ILVY"/>
    <property type="match status" value="1"/>
</dbReference>
<dbReference type="Pfam" id="PF00126">
    <property type="entry name" value="HTH_1"/>
    <property type="match status" value="1"/>
</dbReference>
<dbReference type="Pfam" id="PF03466">
    <property type="entry name" value="LysR_substrate"/>
    <property type="match status" value="1"/>
</dbReference>
<dbReference type="PRINTS" id="PR00039">
    <property type="entry name" value="HTHLYSR"/>
</dbReference>
<dbReference type="SUPFAM" id="SSF53850">
    <property type="entry name" value="Periplasmic binding protein-like II"/>
    <property type="match status" value="1"/>
</dbReference>
<dbReference type="SUPFAM" id="SSF46785">
    <property type="entry name" value="Winged helix' DNA-binding domain"/>
    <property type="match status" value="1"/>
</dbReference>
<dbReference type="PROSITE" id="PS50931">
    <property type="entry name" value="HTH_LYSR"/>
    <property type="match status" value="1"/>
</dbReference>
<gene>
    <name type="primary">ilvY</name>
    <name type="ordered locus">STM3908</name>
    <name type="ORF">STMD1.82</name>
</gene>
<reference key="1">
    <citation type="journal article" date="2001" name="Nature">
        <title>Complete genome sequence of Salmonella enterica serovar Typhimurium LT2.</title>
        <authorList>
            <person name="McClelland M."/>
            <person name="Sanderson K.E."/>
            <person name="Spieth J."/>
            <person name="Clifton S.W."/>
            <person name="Latreille P."/>
            <person name="Courtney L."/>
            <person name="Porwollik S."/>
            <person name="Ali J."/>
            <person name="Dante M."/>
            <person name="Du F."/>
            <person name="Hou S."/>
            <person name="Layman D."/>
            <person name="Leonard S."/>
            <person name="Nguyen C."/>
            <person name="Scott K."/>
            <person name="Holmes A."/>
            <person name="Grewal N."/>
            <person name="Mulvaney E."/>
            <person name="Ryan E."/>
            <person name="Sun H."/>
            <person name="Florea L."/>
            <person name="Miller W."/>
            <person name="Stoneking T."/>
            <person name="Nhan M."/>
            <person name="Waterston R."/>
            <person name="Wilson R.K."/>
        </authorList>
    </citation>
    <scope>NUCLEOTIDE SEQUENCE [LARGE SCALE GENOMIC DNA]</scope>
    <source>
        <strain>LT2 / SGSC1412 / ATCC 700720</strain>
    </source>
</reference>
<reference key="2">
    <citation type="journal article" date="1986" name="J. Biol. Chem.">
        <title>Nucleotide sequence and in vivo expression of the ilvY and ilvC genes in Escherichia coli K12. Transcription from divergent overlapping promoters.</title>
        <authorList>
            <person name="Wek R.C."/>
            <person name="Hatfield G.W."/>
        </authorList>
    </citation>
    <scope>NUCLEOTIDE SEQUENCE [GENOMIC DNA] OF 1-43</scope>
    <source>
        <strain>LT2</strain>
    </source>
</reference>
<comment type="function">
    <text>This protein activates the transcription of the IlvC gene in the presence of acetolactate or acetohydroxybutyrate. IlvY is also a negative regulator of its own expression.</text>
</comment>
<comment type="subcellular location">
    <subcellularLocation>
        <location>Cytoplasm</location>
    </subcellularLocation>
</comment>
<comment type="similarity">
    <text evidence="2">Belongs to the LysR transcriptional regulatory family.</text>
</comment>
<comment type="sequence caution" evidence="2">
    <conflict type="erroneous initiation">
        <sequence resource="EMBL-CDS" id="AAF33477"/>
    </conflict>
</comment>
<protein>
    <recommendedName>
        <fullName>HTH-type transcriptional activator IlvY</fullName>
    </recommendedName>
</protein>
<keyword id="KW-0010">Activator</keyword>
<keyword id="KW-0028">Amino-acid biosynthesis</keyword>
<keyword id="KW-0100">Branched-chain amino acid biosynthesis</keyword>
<keyword id="KW-0963">Cytoplasm</keyword>
<keyword id="KW-0238">DNA-binding</keyword>
<keyword id="KW-1185">Reference proteome</keyword>
<keyword id="KW-0678">Repressor</keyword>
<keyword id="KW-0804">Transcription</keyword>
<keyword id="KW-0805">Transcription regulation</keyword>
<accession>P0A2Q2</accession>
<accession>P05988</accession>
<accession>Q9L6S5</accession>
<proteinExistence type="inferred from homology"/>